<feature type="chain" id="PRO_0000212355" description="Tyrosine-protein kinase wzc">
    <location>
        <begin position="1"/>
        <end position="719"/>
    </location>
</feature>
<feature type="topological domain" description="Cytoplasmic" evidence="2">
    <location>
        <begin position="1"/>
        <end position="30"/>
    </location>
</feature>
<feature type="transmembrane region" description="Helical" evidence="2">
    <location>
        <begin position="31"/>
        <end position="51"/>
    </location>
</feature>
<feature type="topological domain" description="Periplasmic" evidence="2">
    <location>
        <begin position="52"/>
        <end position="423"/>
    </location>
</feature>
<feature type="transmembrane region" description="Helical" evidence="2">
    <location>
        <begin position="424"/>
        <end position="444"/>
    </location>
</feature>
<feature type="topological domain" description="Cytoplasmic" evidence="2">
    <location>
        <begin position="445"/>
        <end position="719"/>
    </location>
</feature>
<feature type="modified residue" description="Phosphotyrosine; by autocatalysis" evidence="1">
    <location>
        <position position="568"/>
    </location>
</feature>
<feature type="modified residue" description="Phosphotyrosine" evidence="1">
    <location>
        <position position="707"/>
    </location>
</feature>
<feature type="modified residue" description="Phosphotyrosine" evidence="1">
    <location>
        <position position="709"/>
    </location>
</feature>
<feature type="modified residue" description="Phosphotyrosine" evidence="1">
    <location>
        <position position="710"/>
    </location>
</feature>
<feature type="modified residue" description="Phosphotyrosine" evidence="1">
    <location>
        <position position="712"/>
    </location>
</feature>
<feature type="modified residue" description="Phosphotyrosine" evidence="1">
    <location>
        <position position="714"/>
    </location>
</feature>
<accession>Q8Z5G6</accession>
<dbReference type="EC" id="2.7.10.-"/>
<dbReference type="EMBL" id="AL513382">
    <property type="protein sequence ID" value="CAD02479.1"/>
    <property type="molecule type" value="Genomic_DNA"/>
</dbReference>
<dbReference type="EMBL" id="AE014613">
    <property type="protein sequence ID" value="AAO68449.1"/>
    <property type="molecule type" value="Genomic_DNA"/>
</dbReference>
<dbReference type="RefSeq" id="NP_456662.1">
    <property type="nucleotide sequence ID" value="NC_003198.1"/>
</dbReference>
<dbReference type="RefSeq" id="WP_000137223.1">
    <property type="nucleotide sequence ID" value="NZ_WSUR01000002.1"/>
</dbReference>
<dbReference type="SMR" id="Q8Z5G6"/>
<dbReference type="STRING" id="220341.gene:17586234"/>
<dbReference type="KEGG" id="stt:t0756"/>
<dbReference type="KEGG" id="sty:STY2329"/>
<dbReference type="PATRIC" id="fig|220341.7.peg.2350"/>
<dbReference type="eggNOG" id="COG0489">
    <property type="taxonomic scope" value="Bacteria"/>
</dbReference>
<dbReference type="eggNOG" id="COG3206">
    <property type="taxonomic scope" value="Bacteria"/>
</dbReference>
<dbReference type="HOGENOM" id="CLU_009912_0_0_6"/>
<dbReference type="OMA" id="TKDHPAY"/>
<dbReference type="OrthoDB" id="9775724at2"/>
<dbReference type="UniPathway" id="UPA00631"/>
<dbReference type="Proteomes" id="UP000000541">
    <property type="component" value="Chromosome"/>
</dbReference>
<dbReference type="Proteomes" id="UP000002670">
    <property type="component" value="Chromosome"/>
</dbReference>
<dbReference type="GO" id="GO:0005886">
    <property type="term" value="C:plasma membrane"/>
    <property type="evidence" value="ECO:0007669"/>
    <property type="project" value="UniProtKB-SubCell"/>
</dbReference>
<dbReference type="GO" id="GO:0005524">
    <property type="term" value="F:ATP binding"/>
    <property type="evidence" value="ECO:0007669"/>
    <property type="project" value="UniProtKB-KW"/>
</dbReference>
<dbReference type="GO" id="GO:0004713">
    <property type="term" value="F:protein tyrosine kinase activity"/>
    <property type="evidence" value="ECO:0007669"/>
    <property type="project" value="UniProtKB-KW"/>
</dbReference>
<dbReference type="GO" id="GO:0000271">
    <property type="term" value="P:polysaccharide biosynthetic process"/>
    <property type="evidence" value="ECO:0007669"/>
    <property type="project" value="UniProtKB-KW"/>
</dbReference>
<dbReference type="CDD" id="cd05387">
    <property type="entry name" value="BY-kinase"/>
    <property type="match status" value="1"/>
</dbReference>
<dbReference type="FunFam" id="3.40.50.300:FF:000527">
    <property type="entry name" value="Tyrosine-protein kinase etk"/>
    <property type="match status" value="1"/>
</dbReference>
<dbReference type="Gene3D" id="3.40.50.300">
    <property type="entry name" value="P-loop containing nucleotide triphosphate hydrolases"/>
    <property type="match status" value="1"/>
</dbReference>
<dbReference type="InterPro" id="IPR025669">
    <property type="entry name" value="AAA_dom"/>
</dbReference>
<dbReference type="InterPro" id="IPR050445">
    <property type="entry name" value="Bact_polysacc_biosynth/exp"/>
</dbReference>
<dbReference type="InterPro" id="IPR032807">
    <property type="entry name" value="GNVR"/>
</dbReference>
<dbReference type="InterPro" id="IPR003856">
    <property type="entry name" value="LPS_length_determ_N_term"/>
</dbReference>
<dbReference type="InterPro" id="IPR027417">
    <property type="entry name" value="P-loop_NTPase"/>
</dbReference>
<dbReference type="InterPro" id="IPR005702">
    <property type="entry name" value="Wzc-like_C"/>
</dbReference>
<dbReference type="NCBIfam" id="TIGR01007">
    <property type="entry name" value="eps_fam"/>
    <property type="match status" value="1"/>
</dbReference>
<dbReference type="NCBIfam" id="NF008568">
    <property type="entry name" value="PRK11519.1"/>
    <property type="match status" value="1"/>
</dbReference>
<dbReference type="PANTHER" id="PTHR32309">
    <property type="entry name" value="TYROSINE-PROTEIN KINASE"/>
    <property type="match status" value="1"/>
</dbReference>
<dbReference type="PANTHER" id="PTHR32309:SF32">
    <property type="entry name" value="TYROSINE-PROTEIN KINASE ETK-RELATED"/>
    <property type="match status" value="1"/>
</dbReference>
<dbReference type="Pfam" id="PF13614">
    <property type="entry name" value="AAA_31"/>
    <property type="match status" value="1"/>
</dbReference>
<dbReference type="Pfam" id="PF13807">
    <property type="entry name" value="GNVR"/>
    <property type="match status" value="1"/>
</dbReference>
<dbReference type="Pfam" id="PF23607">
    <property type="entry name" value="WZC_N"/>
    <property type="match status" value="1"/>
</dbReference>
<dbReference type="Pfam" id="PF02706">
    <property type="entry name" value="Wzz"/>
    <property type="match status" value="1"/>
</dbReference>
<dbReference type="SUPFAM" id="SSF52540">
    <property type="entry name" value="P-loop containing nucleoside triphosphate hydrolases"/>
    <property type="match status" value="1"/>
</dbReference>
<keyword id="KW-0067">ATP-binding</keyword>
<keyword id="KW-0997">Cell inner membrane</keyword>
<keyword id="KW-1003">Cell membrane</keyword>
<keyword id="KW-0270">Exopolysaccharide synthesis</keyword>
<keyword id="KW-0418">Kinase</keyword>
<keyword id="KW-0472">Membrane</keyword>
<keyword id="KW-0547">Nucleotide-binding</keyword>
<keyword id="KW-0597">Phosphoprotein</keyword>
<keyword id="KW-0808">Transferase</keyword>
<keyword id="KW-0812">Transmembrane</keyword>
<keyword id="KW-1133">Transmembrane helix</keyword>
<keyword id="KW-0829">Tyrosine-protein kinase</keyword>
<comment type="function">
    <text evidence="1">Required for the extracellular polysaccharide colanic acid synthesis. The autophosphorylated form is inactive. Probably involved in the export of colanic acid from the cell to medium (By similarity).</text>
</comment>
<comment type="catalytic activity">
    <reaction>
        <text>L-tyrosyl-[protein] + ATP = O-phospho-L-tyrosyl-[protein] + ADP + H(+)</text>
        <dbReference type="Rhea" id="RHEA:10596"/>
        <dbReference type="Rhea" id="RHEA-COMP:10136"/>
        <dbReference type="Rhea" id="RHEA-COMP:20101"/>
        <dbReference type="ChEBI" id="CHEBI:15378"/>
        <dbReference type="ChEBI" id="CHEBI:30616"/>
        <dbReference type="ChEBI" id="CHEBI:46858"/>
        <dbReference type="ChEBI" id="CHEBI:61978"/>
        <dbReference type="ChEBI" id="CHEBI:456216"/>
    </reaction>
</comment>
<comment type="activity regulation">
    <text evidence="1">Dephosphorylated and activated by wzb.</text>
</comment>
<comment type="pathway">
    <text>Glycan metabolism; exopolysaccharide biosynthesis.</text>
</comment>
<comment type="subcellular location">
    <subcellularLocation>
        <location evidence="1">Cell inner membrane</location>
        <topology evidence="1">Multi-pass membrane protein</topology>
    </subcellularLocation>
</comment>
<comment type="PTM">
    <text evidence="1">Autophosphorylated. Seems to be phosphorylated through a cooperative two-step mechanism. First, Tyr-568 is phosphorylated in an intramolecular reaction that generates a significant increase of protein kinase activity. Then Tyr-707, Tyr-709, Tyr-710, Tyr-712 and Tyr-714 are phosphorylated in an intermolecular Tyr-568-dependent reaction (By similarity).</text>
</comment>
<comment type="similarity">
    <text evidence="3">Belongs to the etk/wzc family.</text>
</comment>
<sequence>MTEKVKQSAAVTGSDEIDIGRLVGTVIEARWWVLGTTAIFALCAVIYTFFATPIYSADALVQIEQNAGNSLVQDINSALANKPPASDAEIQLIRSRLVLGKTVDDLDLDIAVTKNTFPLFGAGWERLMGRHNEMVKVTTFTRPETMSGQIFTLKVLGDKRYQLVSDGGFSAQGVVGQPLNKDGVTMRVEAIDARPDTEFTVSKFSTLGMINNLQNNLTVTETGKDTGVLNLTFTGEDRDQIRDILNSITRNYLQQDIAWKSEEAGKSLAFLAKQLPEVRSRLDVAENKLNAFRQDKDSVDLPLEAKAVLDSMVNIDAQLNELTFKEAEISKLFTKAHPAYRTLLEKRKGLEDKKAKLNGRVTAMPKTQQEIVRLTRDVESGQQVYMQLLNKQQELKITEASTVGNVRIVDPAITQPGVLKPKKALIILGSIILGLMLSIVGVLLRSLFNRGIESPQALEEHGISVYASIPLSEWQKARDSVKTIKGIKRYKQSQLLAVGNPTDLAIEAIRSLRTSLHFAMMQAQNNVLMLTGVSSSIGKTFVCANLAAVISQTHKRVLLIDCDMRKGYTHELLGTNNVDGLSDILAGKGEIASCAKPTAIANFDLIPRGQVPPNPSELLMSERFGELIAWASSRYDLVLIDTPPILAVTDAAIVGRHVGTTLMVARYAVNTLKEVETSLSRFDQNGIQVKGVILNSIFRRATGYQDYGYYEYEYQSDSK</sequence>
<name>WZC_SALTI</name>
<protein>
    <recommendedName>
        <fullName>Tyrosine-protein kinase wzc</fullName>
        <ecNumber>2.7.10.-</ecNumber>
    </recommendedName>
</protein>
<proteinExistence type="inferred from homology"/>
<reference key="1">
    <citation type="journal article" date="2001" name="Nature">
        <title>Complete genome sequence of a multiple drug resistant Salmonella enterica serovar Typhi CT18.</title>
        <authorList>
            <person name="Parkhill J."/>
            <person name="Dougan G."/>
            <person name="James K.D."/>
            <person name="Thomson N.R."/>
            <person name="Pickard D."/>
            <person name="Wain J."/>
            <person name="Churcher C.M."/>
            <person name="Mungall K.L."/>
            <person name="Bentley S.D."/>
            <person name="Holden M.T.G."/>
            <person name="Sebaihia M."/>
            <person name="Baker S."/>
            <person name="Basham D."/>
            <person name="Brooks K."/>
            <person name="Chillingworth T."/>
            <person name="Connerton P."/>
            <person name="Cronin A."/>
            <person name="Davis P."/>
            <person name="Davies R.M."/>
            <person name="Dowd L."/>
            <person name="White N."/>
            <person name="Farrar J."/>
            <person name="Feltwell T."/>
            <person name="Hamlin N."/>
            <person name="Haque A."/>
            <person name="Hien T.T."/>
            <person name="Holroyd S."/>
            <person name="Jagels K."/>
            <person name="Krogh A."/>
            <person name="Larsen T.S."/>
            <person name="Leather S."/>
            <person name="Moule S."/>
            <person name="O'Gaora P."/>
            <person name="Parry C."/>
            <person name="Quail M.A."/>
            <person name="Rutherford K.M."/>
            <person name="Simmonds M."/>
            <person name="Skelton J."/>
            <person name="Stevens K."/>
            <person name="Whitehead S."/>
            <person name="Barrell B.G."/>
        </authorList>
    </citation>
    <scope>NUCLEOTIDE SEQUENCE [LARGE SCALE GENOMIC DNA]</scope>
    <source>
        <strain>CT18</strain>
    </source>
</reference>
<reference key="2">
    <citation type="journal article" date="2003" name="J. Bacteriol.">
        <title>Comparative genomics of Salmonella enterica serovar Typhi strains Ty2 and CT18.</title>
        <authorList>
            <person name="Deng W."/>
            <person name="Liou S.-R."/>
            <person name="Plunkett G. III"/>
            <person name="Mayhew G.F."/>
            <person name="Rose D.J."/>
            <person name="Burland V."/>
            <person name="Kodoyianni V."/>
            <person name="Schwartz D.C."/>
            <person name="Blattner F.R."/>
        </authorList>
    </citation>
    <scope>NUCLEOTIDE SEQUENCE [LARGE SCALE GENOMIC DNA]</scope>
    <source>
        <strain>ATCC 700931 / Ty2</strain>
    </source>
</reference>
<evidence type="ECO:0000250" key="1"/>
<evidence type="ECO:0000255" key="2"/>
<evidence type="ECO:0000305" key="3"/>
<organism>
    <name type="scientific">Salmonella typhi</name>
    <dbReference type="NCBI Taxonomy" id="90370"/>
    <lineage>
        <taxon>Bacteria</taxon>
        <taxon>Pseudomonadati</taxon>
        <taxon>Pseudomonadota</taxon>
        <taxon>Gammaproteobacteria</taxon>
        <taxon>Enterobacterales</taxon>
        <taxon>Enterobacteriaceae</taxon>
        <taxon>Salmonella</taxon>
    </lineage>
</organism>
<gene>
    <name type="primary">wzc</name>
    <name type="ordered locus">STY2329</name>
    <name type="ordered locus">t0756</name>
</gene>